<protein>
    <recommendedName>
        <fullName evidence="1">PKHD-type hydroxylase YbiX</fullName>
        <ecNumber evidence="1">1.14.11.-</ecNumber>
    </recommendedName>
</protein>
<reference key="1">
    <citation type="journal article" date="2001" name="Nature">
        <title>Genome sequence of enterohaemorrhagic Escherichia coli O157:H7.</title>
        <authorList>
            <person name="Perna N.T."/>
            <person name="Plunkett G. III"/>
            <person name="Burland V."/>
            <person name="Mau B."/>
            <person name="Glasner J.D."/>
            <person name="Rose D.J."/>
            <person name="Mayhew G.F."/>
            <person name="Evans P.S."/>
            <person name="Gregor J."/>
            <person name="Kirkpatrick H.A."/>
            <person name="Posfai G."/>
            <person name="Hackett J."/>
            <person name="Klink S."/>
            <person name="Boutin A."/>
            <person name="Shao Y."/>
            <person name="Miller L."/>
            <person name="Grotbeck E.J."/>
            <person name="Davis N.W."/>
            <person name="Lim A."/>
            <person name="Dimalanta E.T."/>
            <person name="Potamousis K."/>
            <person name="Apodaca J."/>
            <person name="Anantharaman T.S."/>
            <person name="Lin J."/>
            <person name="Yen G."/>
            <person name="Schwartz D.C."/>
            <person name="Welch R.A."/>
            <person name="Blattner F.R."/>
        </authorList>
    </citation>
    <scope>NUCLEOTIDE SEQUENCE [LARGE SCALE GENOMIC DNA]</scope>
    <source>
        <strain>O157:H7 / EDL933 / ATCC 700927 / EHEC</strain>
    </source>
</reference>
<reference key="2">
    <citation type="journal article" date="2001" name="DNA Res.">
        <title>Complete genome sequence of enterohemorrhagic Escherichia coli O157:H7 and genomic comparison with a laboratory strain K-12.</title>
        <authorList>
            <person name="Hayashi T."/>
            <person name="Makino K."/>
            <person name="Ohnishi M."/>
            <person name="Kurokawa K."/>
            <person name="Ishii K."/>
            <person name="Yokoyama K."/>
            <person name="Han C.-G."/>
            <person name="Ohtsubo E."/>
            <person name="Nakayama K."/>
            <person name="Murata T."/>
            <person name="Tanaka M."/>
            <person name="Tobe T."/>
            <person name="Iida T."/>
            <person name="Takami H."/>
            <person name="Honda T."/>
            <person name="Sasakawa C."/>
            <person name="Ogasawara N."/>
            <person name="Yasunaga T."/>
            <person name="Kuhara S."/>
            <person name="Shiba T."/>
            <person name="Hattori M."/>
            <person name="Shinagawa H."/>
        </authorList>
    </citation>
    <scope>NUCLEOTIDE SEQUENCE [LARGE SCALE GENOMIC DNA]</scope>
    <source>
        <strain>O157:H7 / Sakai / RIMD 0509952 / EHEC</strain>
    </source>
</reference>
<gene>
    <name evidence="1" type="primary">ybiX</name>
    <name type="ordered locus">Z1025</name>
    <name type="ordered locus">ECs0882</name>
</gene>
<accession>Q8X7W8</accession>
<proteinExistence type="inferred from homology"/>
<evidence type="ECO:0000255" key="1">
    <source>
        <dbReference type="HAMAP-Rule" id="MF_00657"/>
    </source>
</evidence>
<evidence type="ECO:0000305" key="2"/>
<dbReference type="EC" id="1.14.11.-" evidence="1"/>
<dbReference type="EMBL" id="AE005174">
    <property type="protein sequence ID" value="AAG55176.1"/>
    <property type="molecule type" value="Genomic_DNA"/>
</dbReference>
<dbReference type="EMBL" id="BA000007">
    <property type="protein sequence ID" value="BAB34305.1"/>
    <property type="status" value="ALT_INIT"/>
    <property type="molecule type" value="Genomic_DNA"/>
</dbReference>
<dbReference type="PIR" id="B90739">
    <property type="entry name" value="B90739"/>
</dbReference>
<dbReference type="PIR" id="D85589">
    <property type="entry name" value="D85589"/>
</dbReference>
<dbReference type="RefSeq" id="NP_308909.2">
    <property type="nucleotide sequence ID" value="NC_002695.1"/>
</dbReference>
<dbReference type="RefSeq" id="WP_000990173.1">
    <property type="nucleotide sequence ID" value="NZ_VOAI01000006.1"/>
</dbReference>
<dbReference type="SMR" id="Q8X7W8"/>
<dbReference type="STRING" id="155864.Z1025"/>
<dbReference type="GeneID" id="917621"/>
<dbReference type="KEGG" id="ece:Z1025"/>
<dbReference type="KEGG" id="ecs:ECs_0882"/>
<dbReference type="PATRIC" id="fig|386585.9.peg.996"/>
<dbReference type="eggNOG" id="COG3128">
    <property type="taxonomic scope" value="Bacteria"/>
</dbReference>
<dbReference type="HOGENOM" id="CLU_106663_0_0_6"/>
<dbReference type="OMA" id="TAGWHAK"/>
<dbReference type="Proteomes" id="UP000000558">
    <property type="component" value="Chromosome"/>
</dbReference>
<dbReference type="Proteomes" id="UP000002519">
    <property type="component" value="Chromosome"/>
</dbReference>
<dbReference type="GO" id="GO:0016706">
    <property type="term" value="F:2-oxoglutarate-dependent dioxygenase activity"/>
    <property type="evidence" value="ECO:0007669"/>
    <property type="project" value="UniProtKB-UniRule"/>
</dbReference>
<dbReference type="GO" id="GO:0005506">
    <property type="term" value="F:iron ion binding"/>
    <property type="evidence" value="ECO:0007669"/>
    <property type="project" value="UniProtKB-UniRule"/>
</dbReference>
<dbReference type="GO" id="GO:0031418">
    <property type="term" value="F:L-ascorbic acid binding"/>
    <property type="evidence" value="ECO:0007669"/>
    <property type="project" value="UniProtKB-KW"/>
</dbReference>
<dbReference type="GO" id="GO:0006974">
    <property type="term" value="P:DNA damage response"/>
    <property type="evidence" value="ECO:0007669"/>
    <property type="project" value="TreeGrafter"/>
</dbReference>
<dbReference type="GO" id="GO:0006879">
    <property type="term" value="P:intracellular iron ion homeostasis"/>
    <property type="evidence" value="ECO:0007669"/>
    <property type="project" value="TreeGrafter"/>
</dbReference>
<dbReference type="FunFam" id="2.60.120.620:FF:000006">
    <property type="entry name" value="PKHD-type hydroxylase YbiX"/>
    <property type="match status" value="1"/>
</dbReference>
<dbReference type="FunFam" id="4.10.860.20:FF:000001">
    <property type="entry name" value="PKHD-type hydroxylase YbiX"/>
    <property type="match status" value="1"/>
</dbReference>
<dbReference type="Gene3D" id="2.60.120.620">
    <property type="entry name" value="q2cbj1_9rhob like domain"/>
    <property type="match status" value="1"/>
</dbReference>
<dbReference type="Gene3D" id="4.10.860.20">
    <property type="entry name" value="Rabenosyn, Rab binding domain"/>
    <property type="match status" value="1"/>
</dbReference>
<dbReference type="HAMAP" id="MF_00657">
    <property type="entry name" value="Hydroxyl_YbiX"/>
    <property type="match status" value="1"/>
</dbReference>
<dbReference type="InterPro" id="IPR005123">
    <property type="entry name" value="Oxoglu/Fe-dep_dioxygenase_dom"/>
</dbReference>
<dbReference type="InterPro" id="IPR041097">
    <property type="entry name" value="PKHD_C"/>
</dbReference>
<dbReference type="InterPro" id="IPR023550">
    <property type="entry name" value="PKHD_hydroxylase"/>
</dbReference>
<dbReference type="InterPro" id="IPR006620">
    <property type="entry name" value="Pro_4_hyd_alph"/>
</dbReference>
<dbReference type="InterPro" id="IPR044862">
    <property type="entry name" value="Pro_4_hyd_alph_FE2OG_OXY"/>
</dbReference>
<dbReference type="NCBIfam" id="NF003972">
    <property type="entry name" value="PRK05467.1-1"/>
    <property type="match status" value="1"/>
</dbReference>
<dbReference type="NCBIfam" id="NF003974">
    <property type="entry name" value="PRK05467.1-3"/>
    <property type="match status" value="1"/>
</dbReference>
<dbReference type="NCBIfam" id="NF003975">
    <property type="entry name" value="PRK05467.1-4"/>
    <property type="match status" value="1"/>
</dbReference>
<dbReference type="PANTHER" id="PTHR41536">
    <property type="entry name" value="PKHD-TYPE HYDROXYLASE YBIX"/>
    <property type="match status" value="1"/>
</dbReference>
<dbReference type="PANTHER" id="PTHR41536:SF1">
    <property type="entry name" value="PKHD-TYPE HYDROXYLASE YBIX"/>
    <property type="match status" value="1"/>
</dbReference>
<dbReference type="Pfam" id="PF13640">
    <property type="entry name" value="2OG-FeII_Oxy_3"/>
    <property type="match status" value="1"/>
</dbReference>
<dbReference type="Pfam" id="PF18331">
    <property type="entry name" value="PKHD_C"/>
    <property type="match status" value="1"/>
</dbReference>
<dbReference type="SMART" id="SM00702">
    <property type="entry name" value="P4Hc"/>
    <property type="match status" value="1"/>
</dbReference>
<dbReference type="SUPFAM" id="SSF51197">
    <property type="entry name" value="Clavaminate synthase-like"/>
    <property type="match status" value="1"/>
</dbReference>
<dbReference type="PROSITE" id="PS51471">
    <property type="entry name" value="FE2OG_OXY"/>
    <property type="match status" value="1"/>
</dbReference>
<sequence length="228" mass="25907">MMYHIPGVLSPQDVARFREQLEQAEWVDGRVTTGAQGAQVKNNQQVDTRSTLYAALQNEVLNAVNQHALFFAAALPRTLSTPLFNRYQNNETYGFHVDGAVRSHPQNGWMRTDLSATLFLSDPQSYDGGELVVNDTFGQHRVKLPAGDLVLYPSSSLHCVTPVTRGVRVASFIWIQSMIRDDKKRAMLFELDKNIQNIQSLKSRYGENEEILSLLNLYHNLLREWSEI</sequence>
<name>YBIX_ECO57</name>
<feature type="chain" id="PRO_0000206678" description="PKHD-type hydroxylase YbiX">
    <location>
        <begin position="1"/>
        <end position="228"/>
    </location>
</feature>
<feature type="domain" description="Fe2OG dioxygenase" evidence="1">
    <location>
        <begin position="78"/>
        <end position="177"/>
    </location>
</feature>
<feature type="binding site" evidence="1">
    <location>
        <position position="96"/>
    </location>
    <ligand>
        <name>Fe cation</name>
        <dbReference type="ChEBI" id="CHEBI:24875"/>
    </ligand>
</feature>
<feature type="binding site" evidence="1">
    <location>
        <position position="98"/>
    </location>
    <ligand>
        <name>Fe cation</name>
        <dbReference type="ChEBI" id="CHEBI:24875"/>
    </ligand>
</feature>
<feature type="binding site" evidence="1">
    <location>
        <position position="158"/>
    </location>
    <ligand>
        <name>Fe cation</name>
        <dbReference type="ChEBI" id="CHEBI:24875"/>
    </ligand>
</feature>
<feature type="binding site" evidence="1">
    <location>
        <position position="168"/>
    </location>
    <ligand>
        <name>2-oxoglutarate</name>
        <dbReference type="ChEBI" id="CHEBI:16810"/>
    </ligand>
</feature>
<comment type="cofactor">
    <cofactor evidence="1">
        <name>Fe(2+)</name>
        <dbReference type="ChEBI" id="CHEBI:29033"/>
    </cofactor>
    <text evidence="1">Binds 1 Fe(2+) ion per subunit.</text>
</comment>
<comment type="cofactor">
    <cofactor evidence="1">
        <name>L-ascorbate</name>
        <dbReference type="ChEBI" id="CHEBI:38290"/>
    </cofactor>
</comment>
<comment type="sequence caution" evidence="2">
    <conflict type="erroneous initiation">
        <sequence resource="EMBL-CDS" id="BAB34305"/>
    </conflict>
</comment>
<keyword id="KW-0223">Dioxygenase</keyword>
<keyword id="KW-0408">Iron</keyword>
<keyword id="KW-0479">Metal-binding</keyword>
<keyword id="KW-0560">Oxidoreductase</keyword>
<keyword id="KW-1185">Reference proteome</keyword>
<keyword id="KW-0847">Vitamin C</keyword>
<organism>
    <name type="scientific">Escherichia coli O157:H7</name>
    <dbReference type="NCBI Taxonomy" id="83334"/>
    <lineage>
        <taxon>Bacteria</taxon>
        <taxon>Pseudomonadati</taxon>
        <taxon>Pseudomonadota</taxon>
        <taxon>Gammaproteobacteria</taxon>
        <taxon>Enterobacterales</taxon>
        <taxon>Enterobacteriaceae</taxon>
        <taxon>Escherichia</taxon>
    </lineage>
</organism>